<evidence type="ECO:0000255" key="1">
    <source>
        <dbReference type="HAMAP-Rule" id="MF_00340"/>
    </source>
</evidence>
<evidence type="ECO:0000256" key="2">
    <source>
        <dbReference type="SAM" id="MobiDB-lite"/>
    </source>
</evidence>
<evidence type="ECO:0000305" key="3"/>
<keyword id="KW-0687">Ribonucleoprotein</keyword>
<keyword id="KW-0689">Ribosomal protein</keyword>
<accession>Q17YQ4</accession>
<feature type="chain" id="PRO_0000296477" description="Large ribosomal subunit protein bL32">
    <location>
        <begin position="1"/>
        <end position="48"/>
    </location>
</feature>
<feature type="region of interest" description="Disordered" evidence="2">
    <location>
        <begin position="1"/>
        <end position="20"/>
    </location>
</feature>
<feature type="compositionally biased region" description="Basic residues" evidence="2">
    <location>
        <begin position="9"/>
        <end position="20"/>
    </location>
</feature>
<gene>
    <name evidence="1" type="primary">rpmF</name>
    <name type="ordered locus">Hac_0385</name>
</gene>
<protein>
    <recommendedName>
        <fullName evidence="1">Large ribosomal subunit protein bL32</fullName>
    </recommendedName>
    <alternativeName>
        <fullName evidence="3">50S ribosomal protein L32</fullName>
    </alternativeName>
</protein>
<dbReference type="EMBL" id="AM260522">
    <property type="protein sequence ID" value="CAJ99222.1"/>
    <property type="molecule type" value="Genomic_DNA"/>
</dbReference>
<dbReference type="RefSeq" id="WP_000290428.1">
    <property type="nucleotide sequence ID" value="NC_008229.1"/>
</dbReference>
<dbReference type="SMR" id="Q17YQ4"/>
<dbReference type="STRING" id="382638.Hac_0385"/>
<dbReference type="GeneID" id="31757893"/>
<dbReference type="KEGG" id="hac:Hac_0385"/>
<dbReference type="eggNOG" id="COG0333">
    <property type="taxonomic scope" value="Bacteria"/>
</dbReference>
<dbReference type="HOGENOM" id="CLU_129084_1_2_7"/>
<dbReference type="OrthoDB" id="9801927at2"/>
<dbReference type="BioCyc" id="HACI382638:HAC_RS01745-MONOMER"/>
<dbReference type="Proteomes" id="UP000000775">
    <property type="component" value="Chromosome"/>
</dbReference>
<dbReference type="GO" id="GO:0015934">
    <property type="term" value="C:large ribosomal subunit"/>
    <property type="evidence" value="ECO:0007669"/>
    <property type="project" value="InterPro"/>
</dbReference>
<dbReference type="GO" id="GO:0003735">
    <property type="term" value="F:structural constituent of ribosome"/>
    <property type="evidence" value="ECO:0007669"/>
    <property type="project" value="InterPro"/>
</dbReference>
<dbReference type="GO" id="GO:0006412">
    <property type="term" value="P:translation"/>
    <property type="evidence" value="ECO:0007669"/>
    <property type="project" value="UniProtKB-UniRule"/>
</dbReference>
<dbReference type="HAMAP" id="MF_00340">
    <property type="entry name" value="Ribosomal_bL32"/>
    <property type="match status" value="1"/>
</dbReference>
<dbReference type="InterPro" id="IPR002677">
    <property type="entry name" value="Ribosomal_bL32"/>
</dbReference>
<dbReference type="InterPro" id="IPR011332">
    <property type="entry name" value="Ribosomal_zn-bd"/>
</dbReference>
<dbReference type="NCBIfam" id="TIGR01031">
    <property type="entry name" value="rpmF_bact"/>
    <property type="match status" value="1"/>
</dbReference>
<dbReference type="Pfam" id="PF01783">
    <property type="entry name" value="Ribosomal_L32p"/>
    <property type="match status" value="1"/>
</dbReference>
<dbReference type="SUPFAM" id="SSF57829">
    <property type="entry name" value="Zn-binding ribosomal proteins"/>
    <property type="match status" value="1"/>
</dbReference>
<name>RL32_HELAH</name>
<proteinExistence type="inferred from homology"/>
<comment type="similarity">
    <text evidence="1">Belongs to the bacterial ribosomal protein bL32 family.</text>
</comment>
<organism>
    <name type="scientific">Helicobacter acinonychis (strain Sheeba)</name>
    <dbReference type="NCBI Taxonomy" id="382638"/>
    <lineage>
        <taxon>Bacteria</taxon>
        <taxon>Pseudomonadati</taxon>
        <taxon>Campylobacterota</taxon>
        <taxon>Epsilonproteobacteria</taxon>
        <taxon>Campylobacterales</taxon>
        <taxon>Helicobacteraceae</taxon>
        <taxon>Helicobacter</taxon>
    </lineage>
</organism>
<reference key="1">
    <citation type="journal article" date="2006" name="PLoS Genet.">
        <title>Who ate whom? Adaptive Helicobacter genomic changes that accompanied a host jump from early humans to large felines.</title>
        <authorList>
            <person name="Eppinger M."/>
            <person name="Baar C."/>
            <person name="Linz B."/>
            <person name="Raddatz G."/>
            <person name="Lanz C."/>
            <person name="Keller H."/>
            <person name="Morelli G."/>
            <person name="Gressmann H."/>
            <person name="Achtman M."/>
            <person name="Schuster S.C."/>
        </authorList>
    </citation>
    <scope>NUCLEOTIDE SEQUENCE [LARGE SCALE GENOMIC DNA]</scope>
    <source>
        <strain>Sheeba</strain>
    </source>
</reference>
<sequence length="48" mass="5661">MAVPDRRVSKTRAAKRRTHYSVKLAKPIKAKDGTWKLPHHINKFTKEY</sequence>